<evidence type="ECO:0000255" key="1"/>
<evidence type="ECO:0000255" key="2">
    <source>
        <dbReference type="PROSITE-ProRule" id="PRU00289"/>
    </source>
</evidence>
<evidence type="ECO:0000255" key="3">
    <source>
        <dbReference type="PROSITE-ProRule" id="PRU00434"/>
    </source>
</evidence>
<evidence type="ECO:0000255" key="4">
    <source>
        <dbReference type="PROSITE-ProRule" id="PRU00441"/>
    </source>
</evidence>
<evidence type="ECO:0000255" key="5">
    <source>
        <dbReference type="PROSITE-ProRule" id="PRU00498"/>
    </source>
</evidence>
<evidence type="ECO:0000256" key="6">
    <source>
        <dbReference type="SAM" id="MobiDB-lite"/>
    </source>
</evidence>
<evidence type="ECO:0000269" key="7">
    <source>
    </source>
</evidence>
<evidence type="ECO:0000269" key="8">
    <source ref="4"/>
</evidence>
<evidence type="ECO:0000303" key="9">
    <source>
    </source>
</evidence>
<evidence type="ECO:0000305" key="10"/>
<proteinExistence type="evidence at transcript level"/>
<dbReference type="EMBL" id="CM003141">
    <property type="protein sequence ID" value="KIS71538.1"/>
    <property type="molecule type" value="Genomic_DNA"/>
</dbReference>
<dbReference type="EMBL" id="BK004083">
    <property type="protein sequence ID" value="DAA04936.1"/>
    <property type="status" value="ALT_INIT"/>
    <property type="molecule type" value="Genomic_DNA"/>
</dbReference>
<dbReference type="RefSeq" id="XP_011387300.1">
    <property type="nucleotide sequence ID" value="XM_011388998.1"/>
</dbReference>
<dbReference type="SMR" id="A0A0D1CZ63"/>
<dbReference type="STRING" id="237631.A0A0D1CZ63"/>
<dbReference type="GlyCosmos" id="A0A0D1CZ63">
    <property type="glycosylation" value="6 sites, No reported glycans"/>
</dbReference>
<dbReference type="EnsemblFungi" id="KIS71538">
    <property type="protein sequence ID" value="KIS71538"/>
    <property type="gene ID" value="UMAG_01431"/>
</dbReference>
<dbReference type="GeneID" id="23562455"/>
<dbReference type="KEGG" id="uma:UMAG_01431"/>
<dbReference type="VEuPathDB" id="FungiDB:UMAG_01431"/>
<dbReference type="eggNOG" id="KOG0054">
    <property type="taxonomic scope" value="Eukaryota"/>
</dbReference>
<dbReference type="InParanoid" id="A0A0D1CZ63"/>
<dbReference type="OrthoDB" id="6500128at2759"/>
<dbReference type="Proteomes" id="UP000000561">
    <property type="component" value="Chromosome 2"/>
</dbReference>
<dbReference type="GO" id="GO:0016020">
    <property type="term" value="C:membrane"/>
    <property type="evidence" value="ECO:0000318"/>
    <property type="project" value="GO_Central"/>
</dbReference>
<dbReference type="GO" id="GO:0140359">
    <property type="term" value="F:ABC-type transporter activity"/>
    <property type="evidence" value="ECO:0007669"/>
    <property type="project" value="InterPro"/>
</dbReference>
<dbReference type="GO" id="GO:0005524">
    <property type="term" value="F:ATP binding"/>
    <property type="evidence" value="ECO:0007669"/>
    <property type="project" value="UniProtKB-KW"/>
</dbReference>
<dbReference type="GO" id="GO:0016887">
    <property type="term" value="F:ATP hydrolysis activity"/>
    <property type="evidence" value="ECO:0007669"/>
    <property type="project" value="InterPro"/>
</dbReference>
<dbReference type="GO" id="GO:0042626">
    <property type="term" value="F:ATPase-coupled transmembrane transporter activity"/>
    <property type="evidence" value="ECO:0000318"/>
    <property type="project" value="GO_Central"/>
</dbReference>
<dbReference type="GO" id="GO:0055085">
    <property type="term" value="P:transmembrane transport"/>
    <property type="evidence" value="ECO:0000318"/>
    <property type="project" value="GO_Central"/>
</dbReference>
<dbReference type="CDD" id="cd18597">
    <property type="entry name" value="ABC_6TM_YOR1_D1_like"/>
    <property type="match status" value="1"/>
</dbReference>
<dbReference type="CDD" id="cd18606">
    <property type="entry name" value="ABC_6TM_YOR1_D2_like"/>
    <property type="match status" value="1"/>
</dbReference>
<dbReference type="CDD" id="cd03250">
    <property type="entry name" value="ABCC_MRP_domain1"/>
    <property type="match status" value="1"/>
</dbReference>
<dbReference type="CDD" id="cd03244">
    <property type="entry name" value="ABCC_MRP_domain2"/>
    <property type="match status" value="1"/>
</dbReference>
<dbReference type="FunFam" id="1.20.1560.10:FF:000061">
    <property type="entry name" value="ATP-binding cassette transporter YOR1"/>
    <property type="match status" value="1"/>
</dbReference>
<dbReference type="FunFam" id="3.40.50.300:FF:001172">
    <property type="entry name" value="Cystic fibrosis transmembrane conductance regulator"/>
    <property type="match status" value="1"/>
</dbReference>
<dbReference type="FunFam" id="1.20.1560.10:FF:000010">
    <property type="entry name" value="Multidrug resistance-associated ABC transporter"/>
    <property type="match status" value="1"/>
</dbReference>
<dbReference type="FunFam" id="3.40.50.300:FF:000997">
    <property type="entry name" value="Multidrug resistance-associated protein 1"/>
    <property type="match status" value="1"/>
</dbReference>
<dbReference type="Gene3D" id="1.20.1560.10">
    <property type="entry name" value="ABC transporter type 1, transmembrane domain"/>
    <property type="match status" value="2"/>
</dbReference>
<dbReference type="Gene3D" id="3.40.50.300">
    <property type="entry name" value="P-loop containing nucleotide triphosphate hydrolases"/>
    <property type="match status" value="2"/>
</dbReference>
<dbReference type="InterPro" id="IPR003593">
    <property type="entry name" value="AAA+_ATPase"/>
</dbReference>
<dbReference type="InterPro" id="IPR011527">
    <property type="entry name" value="ABC1_TM_dom"/>
</dbReference>
<dbReference type="InterPro" id="IPR036640">
    <property type="entry name" value="ABC1_TM_sf"/>
</dbReference>
<dbReference type="InterPro" id="IPR003439">
    <property type="entry name" value="ABC_transporter-like_ATP-bd"/>
</dbReference>
<dbReference type="InterPro" id="IPR017871">
    <property type="entry name" value="ABC_transporter-like_CS"/>
</dbReference>
<dbReference type="InterPro" id="IPR050173">
    <property type="entry name" value="ABC_transporter_C-like"/>
</dbReference>
<dbReference type="InterPro" id="IPR027417">
    <property type="entry name" value="P-loop_NTPase"/>
</dbReference>
<dbReference type="PANTHER" id="PTHR24223">
    <property type="entry name" value="ATP-BINDING CASSETTE SUB-FAMILY C"/>
    <property type="match status" value="1"/>
</dbReference>
<dbReference type="PANTHER" id="PTHR24223:SF456">
    <property type="entry name" value="MULTIDRUG RESISTANCE-ASSOCIATED PROTEIN LETHAL(2)03659"/>
    <property type="match status" value="1"/>
</dbReference>
<dbReference type="Pfam" id="PF00664">
    <property type="entry name" value="ABC_membrane"/>
    <property type="match status" value="2"/>
</dbReference>
<dbReference type="Pfam" id="PF00005">
    <property type="entry name" value="ABC_tran"/>
    <property type="match status" value="2"/>
</dbReference>
<dbReference type="SMART" id="SM00382">
    <property type="entry name" value="AAA"/>
    <property type="match status" value="2"/>
</dbReference>
<dbReference type="SUPFAM" id="SSF90123">
    <property type="entry name" value="ABC transporter transmembrane region"/>
    <property type="match status" value="2"/>
</dbReference>
<dbReference type="SUPFAM" id="SSF52540">
    <property type="entry name" value="P-loop containing nucleoside triphosphate hydrolases"/>
    <property type="match status" value="2"/>
</dbReference>
<dbReference type="PROSITE" id="PS50929">
    <property type="entry name" value="ABC_TM1F"/>
    <property type="match status" value="2"/>
</dbReference>
<dbReference type="PROSITE" id="PS00211">
    <property type="entry name" value="ABC_TRANSPORTER_1"/>
    <property type="match status" value="2"/>
</dbReference>
<dbReference type="PROSITE" id="PS50893">
    <property type="entry name" value="ABC_TRANSPORTER_2"/>
    <property type="match status" value="2"/>
</dbReference>
<reference key="1">
    <citation type="journal article" date="2006" name="Nature">
        <title>Insights from the genome of the biotrophic fungal plant pathogen Ustilago maydis.</title>
        <authorList>
            <person name="Kaemper J."/>
            <person name="Kahmann R."/>
            <person name="Boelker M."/>
            <person name="Ma L.-J."/>
            <person name="Brefort T."/>
            <person name="Saville B.J."/>
            <person name="Banuett F."/>
            <person name="Kronstad J.W."/>
            <person name="Gold S.E."/>
            <person name="Mueller O."/>
            <person name="Perlin M.H."/>
            <person name="Woesten H.A.B."/>
            <person name="de Vries R."/>
            <person name="Ruiz-Herrera J."/>
            <person name="Reynaga-Pena C.G."/>
            <person name="Snetselaar K."/>
            <person name="McCann M."/>
            <person name="Perez-Martin J."/>
            <person name="Feldbruegge M."/>
            <person name="Basse C.W."/>
            <person name="Steinberg G."/>
            <person name="Ibeas J.I."/>
            <person name="Holloman W."/>
            <person name="Guzman P."/>
            <person name="Farman M.L."/>
            <person name="Stajich J.E."/>
            <person name="Sentandreu R."/>
            <person name="Gonzalez-Prieto J.M."/>
            <person name="Kennell J.C."/>
            <person name="Molina L."/>
            <person name="Schirawski J."/>
            <person name="Mendoza-Mendoza A."/>
            <person name="Greilinger D."/>
            <person name="Muench K."/>
            <person name="Roessel N."/>
            <person name="Scherer M."/>
            <person name="Vranes M."/>
            <person name="Ladendorf O."/>
            <person name="Vincon V."/>
            <person name="Fuchs U."/>
            <person name="Sandrock B."/>
            <person name="Meng S."/>
            <person name="Ho E.C.H."/>
            <person name="Cahill M.J."/>
            <person name="Boyce K.J."/>
            <person name="Klose J."/>
            <person name="Klosterman S.J."/>
            <person name="Deelstra H.J."/>
            <person name="Ortiz-Castellanos L."/>
            <person name="Li W."/>
            <person name="Sanchez-Alonso P."/>
            <person name="Schreier P.H."/>
            <person name="Haeuser-Hahn I."/>
            <person name="Vaupel M."/>
            <person name="Koopmann E."/>
            <person name="Friedrich G."/>
            <person name="Voss H."/>
            <person name="Schlueter T."/>
            <person name="Margolis J."/>
            <person name="Platt D."/>
            <person name="Swimmer C."/>
            <person name="Gnirke A."/>
            <person name="Chen F."/>
            <person name="Vysotskaia V."/>
            <person name="Mannhaupt G."/>
            <person name="Gueldener U."/>
            <person name="Muensterkoetter M."/>
            <person name="Haase D."/>
            <person name="Oesterheld M."/>
            <person name="Mewes H.-W."/>
            <person name="Mauceli E.W."/>
            <person name="DeCaprio D."/>
            <person name="Wade C.M."/>
            <person name="Butler J."/>
            <person name="Young S.K."/>
            <person name="Jaffe D.B."/>
            <person name="Calvo S.E."/>
            <person name="Nusbaum C."/>
            <person name="Galagan J.E."/>
            <person name="Birren B.W."/>
        </authorList>
    </citation>
    <scope>NUCLEOTIDE SEQUENCE [LARGE SCALE GENOMIC DNA]</scope>
    <source>
        <strain>DSM 14603 / FGSC 9021 / UM521</strain>
    </source>
</reference>
<reference key="2">
    <citation type="submission" date="2014-09" db="EMBL/GenBank/DDBJ databases">
        <authorList>
            <person name="Gueldener U."/>
            <person name="Muensterkoetter M."/>
            <person name="Walter M.C."/>
            <person name="Mannhaupt G."/>
            <person name="Kahmann R."/>
        </authorList>
    </citation>
    <scope>GENOME REANNOTATION</scope>
    <source>
        <strain>DSM 14603 / FGSC 9021 / UM521</strain>
    </source>
</reference>
<reference key="3">
    <citation type="journal article" date="2006" name="Plant Cell">
        <title>A ferroxidation/permeation iron uptake system is required for virulence in Ustilago maydis.</title>
        <authorList>
            <person name="Eichhorn H."/>
            <person name="Lessing F."/>
            <person name="Winterberg B."/>
            <person name="Schirawski J."/>
            <person name="Kamper J."/>
            <person name="Muller P."/>
            <person name="Kahmann R."/>
        </authorList>
    </citation>
    <scope>INDUCTION</scope>
    <scope>FUNCTION</scope>
    <source>
        <strain>DSM 14603 / FGSC 9021 / UM521</strain>
    </source>
</reference>
<reference key="4">
    <citation type="journal article" date="2010" name="Mol. Microbiol.">
        <title>Elucidation of the complete ferrichrome A biosynthetic pathway in Ustilago maydis.</title>
        <authorList>
            <person name="Winterberg B."/>
            <person name="Uhlmann S."/>
            <person name="Linne U."/>
            <person name="Lessing F."/>
            <person name="Marahiel M.A."/>
            <person name="Eichhorn H."/>
            <person name="Kahmann R."/>
            <person name="Schirawski J."/>
        </authorList>
    </citation>
    <scope>FUNCTION</scope>
    <source>
        <strain>DSM 14603 / FGSC 9021 / UM521</strain>
    </source>
</reference>
<keyword id="KW-0067">ATP-binding</keyword>
<keyword id="KW-0325">Glycoprotein</keyword>
<keyword id="KW-0472">Membrane</keyword>
<keyword id="KW-0547">Nucleotide-binding</keyword>
<keyword id="KW-1185">Reference proteome</keyword>
<keyword id="KW-0677">Repeat</keyword>
<keyword id="KW-0732">Signal</keyword>
<keyword id="KW-0812">Transmembrane</keyword>
<keyword id="KW-1133">Transmembrane helix</keyword>
<keyword id="KW-0813">Transport</keyword>
<keyword id="KW-0843">Virulence</keyword>
<organism>
    <name type="scientific">Mycosarcoma maydis</name>
    <name type="common">Corn smut fungus</name>
    <name type="synonym">Ustilago maydis</name>
    <dbReference type="NCBI Taxonomy" id="5270"/>
    <lineage>
        <taxon>Eukaryota</taxon>
        <taxon>Fungi</taxon>
        <taxon>Dikarya</taxon>
        <taxon>Basidiomycota</taxon>
        <taxon>Ustilaginomycotina</taxon>
        <taxon>Ustilaginomycetes</taxon>
        <taxon>Ustilaginales</taxon>
        <taxon>Ustilaginaceae</taxon>
        <taxon>Mycosarcoma</taxon>
    </lineage>
</organism>
<name>FER6_MYCMD</name>
<feature type="signal peptide" evidence="1">
    <location>
        <begin position="1"/>
        <end position="23"/>
    </location>
</feature>
<feature type="chain" id="PRO_0000441962" description="Multidrug resistance protein fer6">
    <location>
        <begin position="24"/>
        <end position="1337"/>
    </location>
</feature>
<feature type="transmembrane region" description="Helical" evidence="1 4">
    <location>
        <begin position="94"/>
        <end position="114"/>
    </location>
</feature>
<feature type="transmembrane region" description="Helical" evidence="1 4">
    <location>
        <begin position="138"/>
        <end position="158"/>
    </location>
</feature>
<feature type="transmembrane region" description="Helical" evidence="1 4">
    <location>
        <begin position="220"/>
        <end position="242"/>
    </location>
</feature>
<feature type="transmembrane region" description="Helical" evidence="1 4">
    <location>
        <begin position="247"/>
        <end position="269"/>
    </location>
</feature>
<feature type="transmembrane region" description="Helical" evidence="1 4">
    <location>
        <begin position="331"/>
        <end position="351"/>
    </location>
</feature>
<feature type="transmembrane region" description="Helical" evidence="1 4">
    <location>
        <begin position="359"/>
        <end position="379"/>
    </location>
</feature>
<feature type="transmembrane region" description="Helical" evidence="1">
    <location>
        <begin position="769"/>
        <end position="789"/>
    </location>
</feature>
<feature type="transmembrane region" description="Helical" evidence="1 4">
    <location>
        <begin position="817"/>
        <end position="837"/>
    </location>
</feature>
<feature type="transmembrane region" description="Helical" evidence="1 4">
    <location>
        <begin position="890"/>
        <end position="909"/>
    </location>
</feature>
<feature type="transmembrane region" description="Helical" evidence="1 4">
    <location>
        <begin position="915"/>
        <end position="933"/>
    </location>
</feature>
<feature type="transmembrane region" description="Helical" evidence="1 4">
    <location>
        <begin position="999"/>
        <end position="1019"/>
    </location>
</feature>
<feature type="transmembrane region" description="Helical" evidence="1 4">
    <location>
        <begin position="1028"/>
        <end position="1048"/>
    </location>
</feature>
<feature type="domain" description="ABC transmembrane type-1 1" evidence="4">
    <location>
        <begin position="95"/>
        <end position="386"/>
    </location>
</feature>
<feature type="domain" description="ABC transporter 1" evidence="3">
    <location>
        <begin position="417"/>
        <end position="667"/>
    </location>
</feature>
<feature type="domain" description="ABC transmembrane type-1 2" evidence="4">
    <location>
        <begin position="781"/>
        <end position="1056"/>
    </location>
</feature>
<feature type="domain" description="ABC transporter 2" evidence="3">
    <location>
        <begin position="1097"/>
        <end position="1325"/>
    </location>
</feature>
<feature type="region of interest" description="Disordered" evidence="6">
    <location>
        <begin position="432"/>
        <end position="460"/>
    </location>
</feature>
<feature type="region of interest" description="Disordered" evidence="6">
    <location>
        <begin position="699"/>
        <end position="751"/>
    </location>
</feature>
<feature type="compositionally biased region" description="Basic and acidic residues" evidence="6">
    <location>
        <begin position="438"/>
        <end position="455"/>
    </location>
</feature>
<feature type="compositionally biased region" description="Low complexity" evidence="6">
    <location>
        <begin position="700"/>
        <end position="718"/>
    </location>
</feature>
<feature type="binding site" evidence="3">
    <location>
        <begin position="478"/>
        <end position="485"/>
    </location>
    <ligand>
        <name>ATP</name>
        <dbReference type="ChEBI" id="CHEBI:30616"/>
    </ligand>
</feature>
<feature type="binding site" evidence="2">
    <location>
        <begin position="1131"/>
        <end position="1138"/>
    </location>
    <ligand>
        <name>ATP</name>
        <dbReference type="ChEBI" id="CHEBI:30616"/>
    </ligand>
</feature>
<feature type="glycosylation site" description="N-linked (GlcNAc...) asparagine" evidence="5">
    <location>
        <position position="71"/>
    </location>
</feature>
<feature type="glycosylation site" description="N-linked (GlcNAc...) asparagine" evidence="5">
    <location>
        <position position="187"/>
    </location>
</feature>
<feature type="glycosylation site" description="N-linked (GlcNAc...) asparagine" evidence="5">
    <location>
        <position position="465"/>
    </location>
</feature>
<feature type="glycosylation site" description="N-linked (GlcNAc...) asparagine" evidence="5">
    <location>
        <position position="731"/>
    </location>
</feature>
<feature type="glycosylation site" description="N-linked (GlcNAc...) asparagine" evidence="5">
    <location>
        <position position="1057"/>
    </location>
</feature>
<feature type="glycosylation site" description="N-linked (GlcNAc...) asparagine" evidence="5">
    <location>
        <position position="1227"/>
    </location>
</feature>
<protein>
    <recommendedName>
        <fullName evidence="9">Multidrug resistance protein fer6</fullName>
    </recommendedName>
    <alternativeName>
        <fullName evidence="10">ATP-binding cassette sub-family C member fer6</fullName>
    </alternativeName>
    <alternativeName>
        <fullName evidence="9">Fe-regulated protein 6</fullName>
    </alternativeName>
</protein>
<comment type="function">
    <text evidence="7 8">Multidrug resistance protein; part of the gene cluster that mediates the biosynthesis of siderophore ferrichrome A which is contributing to organismal virulence (PubMed:17138696, Ref.4).</text>
</comment>
<comment type="subcellular location">
    <subcellularLocation>
        <location evidence="1">Membrane</location>
        <topology evidence="1">Multi-pass membrane protein</topology>
    </subcellularLocation>
</comment>
<comment type="induction">
    <text evidence="7">Expression regulated by iron through the urbs1 transcription factor (PubMed:17138696).</text>
</comment>
<comment type="similarity">
    <text evidence="10">Belongs to the ABC transporter superfamily. ABCC family. Conjugate transporter (TC 3.A.1.208) subfamily.</text>
</comment>
<comment type="sequence caution" evidence="10">
    <conflict type="erroneous initiation">
        <sequence resource="EMBL-CDS" id="DAA04936"/>
    </conflict>
    <text>Extended N-terminus.</text>
</comment>
<accession>A0A0D1CZ63</accession>
<accession>A1A655</accession>
<accession>Q4PEN2</accession>
<gene>
    <name evidence="9" type="primary">fer6</name>
    <name type="ORF">UMAG_01431</name>
</gene>
<sequence>MTPEASANWFSLCWFAWIDPILTAGYTRPMEKDDLYLLQPHRCSEHLGSQLLAALEKRRKQRQDYVEANPNKTDKPAKIPPLMWAMNDIVFRYFWIGGLLKLLADVGTITSPLLVRALINFGRDSYNLRGDRDQAPNLGSGVGLAIGLFLVQALCVFLNVHAFNRGFGTGIILRGALIQAIFQRGMNLSTRARTVGGLGVSKLVTLISADATRIDYAGQFFHMAWTSAVQIIICVALLIWSLSYSALPGIAVLVLMSPIQTAITKRLFALRKKSMVWTDKRNKAVNEVVGGIRVVKQFAWEEPYSVRIAELRRKEMSFHRVRLYLRSLNLALAFATPTIATVLSFVTYALVGNELDAAILFSSLSFFTLLRTPLQFLPIAWNAIVDAKNAADRIEKVFDAEIQRDQIIRDCSATNGIQLEDASFTWETAQAADTAKPVNEKKGQDSPSNEKETPVDRASTLDSLNLTVPRGTLCAIVGGVGSGKSSLISALAGEMRQIAGKVTLSGSTAVCAQTAWIQSTTIRNNIVFGNAFDPERYRYVLEVCCLLPDLDTLADGDQTIVGEKGVSLSGGQKQRLNIARALYHNSEIVLLDDCLSALDARVGADIFANVIAGDAMAGKTRLLVTHSLNVLRSCDWIVHMEEGRITEQGTYAELVESKGRVAELLLTHTKDHFEEEKKEPSKHPIDEIQETAESILDAGSASNRNSEASESTTTTVNAESKDTSNAEGVTNKTEKKDLVAPPAQAKSKALMQDEERFSGSVSRTTYLSYLNAAPLSILLPLFLVAVLVFQGSTIMSPVWLLWWQNGHFGLQQGVYMGIYAVFGITQSLGLLSMGVIFSTFTIKSATTLHHRALQRVLHAPFSFFDTTPQGRITHRFSKDMDTLDNIIGEAMRTLIGTIVQVIGSIVLIAILTPYFLIPVAVILVLYFWIAAYYRSTARELRRIDAGLRSNMHEHFSESLHGLVTIRAFGNVDAFIAENCRRIDKQNRAYWLAQTCQRWLSVRLDFLGSLLILSVAILVVASRFDISPGETGVALSYILTAQSIFGWMIRHAAELENNMSAVERVLHYANHIEQEKPYHIPQVDDALEAREWPERGEIRFEGVEAKYGSSERNVLDKLDLHIAPGEKIAFCGRTGAGKSTLVTTLLRTLELSAGTITIDGIDIASMGLHRLRSSLSLIPQDAVIYSGTLRYNLDPLDQHEDATLHDALQRTSLTDLSLDMTITEEGGNLSAGQRSLISLARAMVRKTRIVILDEATASIDQETDVQIQEVLRNEFDGITTLTVAHRIQTILHSDRVCVLDKGVIVEIGSPAELWAKEKGAFRALCDSANIRYQDGEWK</sequence>